<proteinExistence type="inferred from homology"/>
<accession>Q89IW3</accession>
<gene>
    <name evidence="1" type="primary">hisI</name>
    <name type="ordered locus">bll5521</name>
</gene>
<evidence type="ECO:0000255" key="1">
    <source>
        <dbReference type="HAMAP-Rule" id="MF_01021"/>
    </source>
</evidence>
<protein>
    <recommendedName>
        <fullName evidence="1">Phosphoribosyl-AMP cyclohydrolase</fullName>
        <shortName evidence="1">PRA-CH</shortName>
        <ecNumber evidence="1">3.5.4.19</ecNumber>
    </recommendedName>
</protein>
<comment type="function">
    <text evidence="1">Catalyzes the hydrolysis of the adenine ring of phosphoribosyl-AMP.</text>
</comment>
<comment type="catalytic activity">
    <reaction evidence="1">
        <text>1-(5-phospho-beta-D-ribosyl)-5'-AMP + H2O = 1-(5-phospho-beta-D-ribosyl)-5-[(5-phospho-beta-D-ribosylamino)methylideneamino]imidazole-4-carboxamide</text>
        <dbReference type="Rhea" id="RHEA:20049"/>
        <dbReference type="ChEBI" id="CHEBI:15377"/>
        <dbReference type="ChEBI" id="CHEBI:58435"/>
        <dbReference type="ChEBI" id="CHEBI:59457"/>
        <dbReference type="EC" id="3.5.4.19"/>
    </reaction>
</comment>
<comment type="cofactor">
    <cofactor evidence="1">
        <name>Mg(2+)</name>
        <dbReference type="ChEBI" id="CHEBI:18420"/>
    </cofactor>
    <text evidence="1">Binds 1 Mg(2+) ion per subunit.</text>
</comment>
<comment type="cofactor">
    <cofactor evidence="1">
        <name>Zn(2+)</name>
        <dbReference type="ChEBI" id="CHEBI:29105"/>
    </cofactor>
    <text evidence="1">Binds 1 zinc ion per subunit.</text>
</comment>
<comment type="pathway">
    <text evidence="1">Amino-acid biosynthesis; L-histidine biosynthesis; L-histidine from 5-phospho-alpha-D-ribose 1-diphosphate: step 3/9.</text>
</comment>
<comment type="subunit">
    <text evidence="1">Homodimer.</text>
</comment>
<comment type="subcellular location">
    <subcellularLocation>
        <location evidence="1">Cytoplasm</location>
    </subcellularLocation>
</comment>
<comment type="similarity">
    <text evidence="1">Belongs to the PRA-CH family.</text>
</comment>
<feature type="chain" id="PRO_0000136465" description="Phosphoribosyl-AMP cyclohydrolase">
    <location>
        <begin position="1"/>
        <end position="140"/>
    </location>
</feature>
<feature type="binding site" evidence="1">
    <location>
        <position position="85"/>
    </location>
    <ligand>
        <name>Mg(2+)</name>
        <dbReference type="ChEBI" id="CHEBI:18420"/>
    </ligand>
</feature>
<feature type="binding site" evidence="1">
    <location>
        <position position="86"/>
    </location>
    <ligand>
        <name>Zn(2+)</name>
        <dbReference type="ChEBI" id="CHEBI:29105"/>
        <note>ligand shared between dimeric partners</note>
    </ligand>
</feature>
<feature type="binding site" evidence="1">
    <location>
        <position position="87"/>
    </location>
    <ligand>
        <name>Mg(2+)</name>
        <dbReference type="ChEBI" id="CHEBI:18420"/>
    </ligand>
</feature>
<feature type="binding site" evidence="1">
    <location>
        <position position="89"/>
    </location>
    <ligand>
        <name>Mg(2+)</name>
        <dbReference type="ChEBI" id="CHEBI:18420"/>
    </ligand>
</feature>
<feature type="binding site" evidence="1">
    <location>
        <position position="102"/>
    </location>
    <ligand>
        <name>Zn(2+)</name>
        <dbReference type="ChEBI" id="CHEBI:29105"/>
        <note>ligand shared between dimeric partners</note>
    </ligand>
</feature>
<feature type="binding site" evidence="1">
    <location>
        <position position="109"/>
    </location>
    <ligand>
        <name>Zn(2+)</name>
        <dbReference type="ChEBI" id="CHEBI:29105"/>
        <note>ligand shared between dimeric partners</note>
    </ligand>
</feature>
<name>HIS3_BRADU</name>
<keyword id="KW-0028">Amino-acid biosynthesis</keyword>
<keyword id="KW-0963">Cytoplasm</keyword>
<keyword id="KW-0368">Histidine biosynthesis</keyword>
<keyword id="KW-0378">Hydrolase</keyword>
<keyword id="KW-0460">Magnesium</keyword>
<keyword id="KW-0479">Metal-binding</keyword>
<keyword id="KW-1185">Reference proteome</keyword>
<keyword id="KW-0862">Zinc</keyword>
<sequence>MSAHSHEIEEGLSFQPRFDASGLVTCVATDVATGDVLMVAHMNDEALRKTIATGEAWYFSRSRNALWRKGETSGQTQRVVEMRTDCDQDAVWIRVEQIGAACHTGRRSCFYRKVEAEDGGAKLVFVDADRLFDPDAVYKK</sequence>
<reference key="1">
    <citation type="journal article" date="2002" name="DNA Res.">
        <title>Complete genomic sequence of nitrogen-fixing symbiotic bacterium Bradyrhizobium japonicum USDA110.</title>
        <authorList>
            <person name="Kaneko T."/>
            <person name="Nakamura Y."/>
            <person name="Sato S."/>
            <person name="Minamisawa K."/>
            <person name="Uchiumi T."/>
            <person name="Sasamoto S."/>
            <person name="Watanabe A."/>
            <person name="Idesawa K."/>
            <person name="Iriguchi M."/>
            <person name="Kawashima K."/>
            <person name="Kohara M."/>
            <person name="Matsumoto M."/>
            <person name="Shimpo S."/>
            <person name="Tsuruoka H."/>
            <person name="Wada T."/>
            <person name="Yamada M."/>
            <person name="Tabata S."/>
        </authorList>
    </citation>
    <scope>NUCLEOTIDE SEQUENCE [LARGE SCALE GENOMIC DNA]</scope>
    <source>
        <strain>JCM 10833 / BCRC 13528 / IAM 13628 / NBRC 14792 / USDA 110</strain>
    </source>
</reference>
<dbReference type="EC" id="3.5.4.19" evidence="1"/>
<dbReference type="EMBL" id="BA000040">
    <property type="protein sequence ID" value="BAC50786.1"/>
    <property type="molecule type" value="Genomic_DNA"/>
</dbReference>
<dbReference type="RefSeq" id="NP_772161.1">
    <property type="nucleotide sequence ID" value="NC_004463.1"/>
</dbReference>
<dbReference type="RefSeq" id="WP_011088269.1">
    <property type="nucleotide sequence ID" value="NC_004463.1"/>
</dbReference>
<dbReference type="SMR" id="Q89IW3"/>
<dbReference type="STRING" id="224911.AAV28_25075"/>
<dbReference type="EnsemblBacteria" id="BAC50786">
    <property type="protein sequence ID" value="BAC50786"/>
    <property type="gene ID" value="BAC50786"/>
</dbReference>
<dbReference type="GeneID" id="46492522"/>
<dbReference type="KEGG" id="bja:bll5521"/>
<dbReference type="PATRIC" id="fig|224911.44.peg.5438"/>
<dbReference type="eggNOG" id="COG0139">
    <property type="taxonomic scope" value="Bacteria"/>
</dbReference>
<dbReference type="HOGENOM" id="CLU_048577_5_0_5"/>
<dbReference type="InParanoid" id="Q89IW3"/>
<dbReference type="OrthoDB" id="9795769at2"/>
<dbReference type="PhylomeDB" id="Q89IW3"/>
<dbReference type="UniPathway" id="UPA00031">
    <property type="reaction ID" value="UER00008"/>
</dbReference>
<dbReference type="Proteomes" id="UP000002526">
    <property type="component" value="Chromosome"/>
</dbReference>
<dbReference type="GO" id="GO:0005737">
    <property type="term" value="C:cytoplasm"/>
    <property type="evidence" value="ECO:0007669"/>
    <property type="project" value="UniProtKB-SubCell"/>
</dbReference>
<dbReference type="GO" id="GO:0000287">
    <property type="term" value="F:magnesium ion binding"/>
    <property type="evidence" value="ECO:0007669"/>
    <property type="project" value="UniProtKB-UniRule"/>
</dbReference>
<dbReference type="GO" id="GO:0004635">
    <property type="term" value="F:phosphoribosyl-AMP cyclohydrolase activity"/>
    <property type="evidence" value="ECO:0007669"/>
    <property type="project" value="UniProtKB-UniRule"/>
</dbReference>
<dbReference type="GO" id="GO:0008270">
    <property type="term" value="F:zinc ion binding"/>
    <property type="evidence" value="ECO:0007669"/>
    <property type="project" value="UniProtKB-UniRule"/>
</dbReference>
<dbReference type="GO" id="GO:0000105">
    <property type="term" value="P:L-histidine biosynthetic process"/>
    <property type="evidence" value="ECO:0007669"/>
    <property type="project" value="UniProtKB-UniRule"/>
</dbReference>
<dbReference type="FunFam" id="3.10.20.810:FF:000001">
    <property type="entry name" value="Histidine biosynthesis bifunctional protein HisIE"/>
    <property type="match status" value="1"/>
</dbReference>
<dbReference type="Gene3D" id="4.10.80.70">
    <property type="match status" value="1"/>
</dbReference>
<dbReference type="Gene3D" id="3.10.20.810">
    <property type="entry name" value="Phosphoribosyl-AMP cyclohydrolase"/>
    <property type="match status" value="1"/>
</dbReference>
<dbReference type="HAMAP" id="MF_01021">
    <property type="entry name" value="HisI"/>
    <property type="match status" value="1"/>
</dbReference>
<dbReference type="InterPro" id="IPR026660">
    <property type="entry name" value="PRA-CH"/>
</dbReference>
<dbReference type="InterPro" id="IPR002496">
    <property type="entry name" value="PRib_AMP_CycHydrolase_dom"/>
</dbReference>
<dbReference type="InterPro" id="IPR038019">
    <property type="entry name" value="PRib_AMP_CycHydrolase_sf"/>
</dbReference>
<dbReference type="NCBIfam" id="NF000768">
    <property type="entry name" value="PRK00051.1"/>
    <property type="match status" value="1"/>
</dbReference>
<dbReference type="PANTHER" id="PTHR42945">
    <property type="entry name" value="HISTIDINE BIOSYNTHESIS BIFUNCTIONAL PROTEIN"/>
    <property type="match status" value="1"/>
</dbReference>
<dbReference type="PANTHER" id="PTHR42945:SF1">
    <property type="entry name" value="HISTIDINE BIOSYNTHESIS BIFUNCTIONAL PROTEIN HIS7"/>
    <property type="match status" value="1"/>
</dbReference>
<dbReference type="Pfam" id="PF01502">
    <property type="entry name" value="PRA-CH"/>
    <property type="match status" value="1"/>
</dbReference>
<dbReference type="SUPFAM" id="SSF141734">
    <property type="entry name" value="HisI-like"/>
    <property type="match status" value="1"/>
</dbReference>
<organism>
    <name type="scientific">Bradyrhizobium diazoefficiens (strain JCM 10833 / BCRC 13528 / IAM 13628 / NBRC 14792 / USDA 110)</name>
    <dbReference type="NCBI Taxonomy" id="224911"/>
    <lineage>
        <taxon>Bacteria</taxon>
        <taxon>Pseudomonadati</taxon>
        <taxon>Pseudomonadota</taxon>
        <taxon>Alphaproteobacteria</taxon>
        <taxon>Hyphomicrobiales</taxon>
        <taxon>Nitrobacteraceae</taxon>
        <taxon>Bradyrhizobium</taxon>
    </lineage>
</organism>